<dbReference type="EMBL" id="CP000529">
    <property type="protein sequence ID" value="ABM38521.1"/>
    <property type="molecule type" value="Genomic_DNA"/>
</dbReference>
<dbReference type="RefSeq" id="WP_011802592.1">
    <property type="nucleotide sequence ID" value="NC_008781.1"/>
</dbReference>
<dbReference type="SMR" id="A1VS93"/>
<dbReference type="STRING" id="365044.Pnap_3223"/>
<dbReference type="KEGG" id="pna:Pnap_3223"/>
<dbReference type="eggNOG" id="COG3132">
    <property type="taxonomic scope" value="Bacteria"/>
</dbReference>
<dbReference type="HOGENOM" id="CLU_057831_0_0_4"/>
<dbReference type="OrthoDB" id="9784785at2"/>
<dbReference type="Proteomes" id="UP000000644">
    <property type="component" value="Chromosome"/>
</dbReference>
<dbReference type="Gene3D" id="1.10.10.10">
    <property type="entry name" value="Winged helix-like DNA-binding domain superfamily/Winged helix DNA-binding domain"/>
    <property type="match status" value="2"/>
</dbReference>
<dbReference type="HAMAP" id="MF_01584">
    <property type="entry name" value="UPF0502"/>
    <property type="match status" value="1"/>
</dbReference>
<dbReference type="InterPro" id="IPR007432">
    <property type="entry name" value="DUF480"/>
</dbReference>
<dbReference type="InterPro" id="IPR036388">
    <property type="entry name" value="WH-like_DNA-bd_sf"/>
</dbReference>
<dbReference type="InterPro" id="IPR036390">
    <property type="entry name" value="WH_DNA-bd_sf"/>
</dbReference>
<dbReference type="PANTHER" id="PTHR38768">
    <property type="entry name" value="UPF0502 PROTEIN YCEH"/>
    <property type="match status" value="1"/>
</dbReference>
<dbReference type="PANTHER" id="PTHR38768:SF1">
    <property type="entry name" value="UPF0502 PROTEIN YCEH"/>
    <property type="match status" value="1"/>
</dbReference>
<dbReference type="Pfam" id="PF04337">
    <property type="entry name" value="DUF480"/>
    <property type="match status" value="1"/>
</dbReference>
<dbReference type="SUPFAM" id="SSF46785">
    <property type="entry name" value="Winged helix' DNA-binding domain"/>
    <property type="match status" value="2"/>
</dbReference>
<comment type="similarity">
    <text evidence="1">Belongs to the UPF0502 family.</text>
</comment>
<proteinExistence type="inferred from homology"/>
<keyword id="KW-1185">Reference proteome</keyword>
<feature type="chain" id="PRO_0000309398" description="UPF0502 protein Pnap_3223">
    <location>
        <begin position="1"/>
        <end position="220"/>
    </location>
</feature>
<reference key="1">
    <citation type="journal article" date="2009" name="Environ. Microbiol.">
        <title>The genome of Polaromonas naphthalenivorans strain CJ2, isolated from coal tar-contaminated sediment, reveals physiological and metabolic versatility and evolution through extensive horizontal gene transfer.</title>
        <authorList>
            <person name="Yagi J.M."/>
            <person name="Sims D."/>
            <person name="Brettin T."/>
            <person name="Bruce D."/>
            <person name="Madsen E.L."/>
        </authorList>
    </citation>
    <scope>NUCLEOTIDE SEQUENCE [LARGE SCALE GENOMIC DNA]</scope>
    <source>
        <strain>CJ2</strain>
    </source>
</reference>
<sequence>MRQLTPHEARVLATLMEKARTVPDSYPLSLNTLVLGCNQKTSRDPVMDLTEAQAQAAIDTLKKQSLVFEASSSRVPRFEHNFQRGFGVSEPQAVLLGLLMLRGPQTPGELRLNSERWYKFADIASVEDALAELKARGDDSGALMVVQLARTAGMREQRWAHLLCGESLLMPYQQAGSGDAAINPETEPVSLGQAERLQQRIDALERQVAHLYKELGLSQA</sequence>
<protein>
    <recommendedName>
        <fullName evidence="1">UPF0502 protein Pnap_3223</fullName>
    </recommendedName>
</protein>
<organism>
    <name type="scientific">Polaromonas naphthalenivorans (strain CJ2)</name>
    <dbReference type="NCBI Taxonomy" id="365044"/>
    <lineage>
        <taxon>Bacteria</taxon>
        <taxon>Pseudomonadati</taxon>
        <taxon>Pseudomonadota</taxon>
        <taxon>Betaproteobacteria</taxon>
        <taxon>Burkholderiales</taxon>
        <taxon>Comamonadaceae</taxon>
        <taxon>Polaromonas</taxon>
    </lineage>
</organism>
<name>Y3223_POLNA</name>
<evidence type="ECO:0000255" key="1">
    <source>
        <dbReference type="HAMAP-Rule" id="MF_01584"/>
    </source>
</evidence>
<accession>A1VS93</accession>
<gene>
    <name type="ordered locus">Pnap_3223</name>
</gene>